<feature type="chain" id="PRO_1000100559" description="Adenylate kinase">
    <location>
        <begin position="1"/>
        <end position="214"/>
    </location>
</feature>
<feature type="region of interest" description="NMP" evidence="2">
    <location>
        <begin position="30"/>
        <end position="59"/>
    </location>
</feature>
<feature type="region of interest" description="LID">
    <location>
        <begin position="122"/>
        <end position="159"/>
    </location>
</feature>
<feature type="binding site" evidence="2">
    <location>
        <begin position="10"/>
        <end position="15"/>
    </location>
    <ligand>
        <name>ATP</name>
        <dbReference type="ChEBI" id="CHEBI:30616"/>
    </ligand>
</feature>
<feature type="binding site" evidence="2">
    <location>
        <position position="31"/>
    </location>
    <ligand>
        <name>AMP</name>
        <dbReference type="ChEBI" id="CHEBI:456215"/>
    </ligand>
</feature>
<feature type="binding site" evidence="2">
    <location>
        <position position="36"/>
    </location>
    <ligand>
        <name>AMP</name>
        <dbReference type="ChEBI" id="CHEBI:456215"/>
    </ligand>
</feature>
<feature type="binding site" evidence="2">
    <location>
        <begin position="57"/>
        <end position="59"/>
    </location>
    <ligand>
        <name>AMP</name>
        <dbReference type="ChEBI" id="CHEBI:456215"/>
    </ligand>
</feature>
<feature type="binding site" evidence="2">
    <location>
        <begin position="85"/>
        <end position="88"/>
    </location>
    <ligand>
        <name>AMP</name>
        <dbReference type="ChEBI" id="CHEBI:456215"/>
    </ligand>
</feature>
<feature type="binding site" evidence="2">
    <location>
        <position position="92"/>
    </location>
    <ligand>
        <name>AMP</name>
        <dbReference type="ChEBI" id="CHEBI:456215"/>
    </ligand>
</feature>
<feature type="binding site" evidence="2">
    <location>
        <position position="123"/>
    </location>
    <ligand>
        <name>ATP</name>
        <dbReference type="ChEBI" id="CHEBI:30616"/>
    </ligand>
</feature>
<feature type="binding site" evidence="2">
    <location>
        <begin position="132"/>
        <end position="133"/>
    </location>
    <ligand>
        <name>ATP</name>
        <dbReference type="ChEBI" id="CHEBI:30616"/>
    </ligand>
</feature>
<feature type="binding site" evidence="2">
    <location>
        <position position="156"/>
    </location>
    <ligand>
        <name>AMP</name>
        <dbReference type="ChEBI" id="CHEBI:456215"/>
    </ligand>
</feature>
<feature type="binding site" evidence="2">
    <location>
        <position position="167"/>
    </location>
    <ligand>
        <name>AMP</name>
        <dbReference type="ChEBI" id="CHEBI:456215"/>
    </ligand>
</feature>
<feature type="binding site" evidence="2">
    <location>
        <position position="200"/>
    </location>
    <ligand>
        <name>ATP</name>
        <dbReference type="ChEBI" id="CHEBI:30616"/>
    </ligand>
</feature>
<feature type="modified residue" description="N6-acetyllysine" evidence="1">
    <location>
        <position position="192"/>
    </location>
</feature>
<gene>
    <name evidence="2" type="primary">adk</name>
    <name type="ordered locus">ECDH10B_0430</name>
</gene>
<organism>
    <name type="scientific">Escherichia coli (strain K12 / DH10B)</name>
    <dbReference type="NCBI Taxonomy" id="316385"/>
    <lineage>
        <taxon>Bacteria</taxon>
        <taxon>Pseudomonadati</taxon>
        <taxon>Pseudomonadota</taxon>
        <taxon>Gammaproteobacteria</taxon>
        <taxon>Enterobacterales</taxon>
        <taxon>Enterobacteriaceae</taxon>
        <taxon>Escherichia</taxon>
    </lineage>
</organism>
<dbReference type="EC" id="2.7.4.3" evidence="2"/>
<dbReference type="EMBL" id="CP000948">
    <property type="protein sequence ID" value="ACB01601.1"/>
    <property type="molecule type" value="Genomic_DNA"/>
</dbReference>
<dbReference type="RefSeq" id="WP_001220233.1">
    <property type="nucleotide sequence ID" value="NC_010473.1"/>
</dbReference>
<dbReference type="BMRB" id="B1XFR1"/>
<dbReference type="SMR" id="B1XFR1"/>
<dbReference type="GeneID" id="75170492"/>
<dbReference type="KEGG" id="ecd:ECDH10B_0430"/>
<dbReference type="HOGENOM" id="CLU_032354_1_2_6"/>
<dbReference type="UniPathway" id="UPA00588">
    <property type="reaction ID" value="UER00649"/>
</dbReference>
<dbReference type="GO" id="GO:0005737">
    <property type="term" value="C:cytoplasm"/>
    <property type="evidence" value="ECO:0007669"/>
    <property type="project" value="UniProtKB-SubCell"/>
</dbReference>
<dbReference type="GO" id="GO:0004017">
    <property type="term" value="F:adenylate kinase activity"/>
    <property type="evidence" value="ECO:0007669"/>
    <property type="project" value="UniProtKB-UniRule"/>
</dbReference>
<dbReference type="GO" id="GO:0005524">
    <property type="term" value="F:ATP binding"/>
    <property type="evidence" value="ECO:0007669"/>
    <property type="project" value="UniProtKB-UniRule"/>
</dbReference>
<dbReference type="GO" id="GO:0044209">
    <property type="term" value="P:AMP salvage"/>
    <property type="evidence" value="ECO:0007669"/>
    <property type="project" value="UniProtKB-UniRule"/>
</dbReference>
<dbReference type="CDD" id="cd01428">
    <property type="entry name" value="ADK"/>
    <property type="match status" value="1"/>
</dbReference>
<dbReference type="FunFam" id="3.40.50.300:FF:000106">
    <property type="entry name" value="Adenylate kinase mitochondrial"/>
    <property type="match status" value="1"/>
</dbReference>
<dbReference type="Gene3D" id="3.40.50.300">
    <property type="entry name" value="P-loop containing nucleotide triphosphate hydrolases"/>
    <property type="match status" value="1"/>
</dbReference>
<dbReference type="HAMAP" id="MF_00235">
    <property type="entry name" value="Adenylate_kinase_Adk"/>
    <property type="match status" value="1"/>
</dbReference>
<dbReference type="InterPro" id="IPR006259">
    <property type="entry name" value="Adenyl_kin_sub"/>
</dbReference>
<dbReference type="InterPro" id="IPR000850">
    <property type="entry name" value="Adenylat/UMP-CMP_kin"/>
</dbReference>
<dbReference type="InterPro" id="IPR033690">
    <property type="entry name" value="Adenylat_kinase_CS"/>
</dbReference>
<dbReference type="InterPro" id="IPR007862">
    <property type="entry name" value="Adenylate_kinase_lid-dom"/>
</dbReference>
<dbReference type="InterPro" id="IPR027417">
    <property type="entry name" value="P-loop_NTPase"/>
</dbReference>
<dbReference type="NCBIfam" id="TIGR01351">
    <property type="entry name" value="adk"/>
    <property type="match status" value="1"/>
</dbReference>
<dbReference type="NCBIfam" id="NF001379">
    <property type="entry name" value="PRK00279.1-1"/>
    <property type="match status" value="1"/>
</dbReference>
<dbReference type="NCBIfam" id="NF001380">
    <property type="entry name" value="PRK00279.1-2"/>
    <property type="match status" value="1"/>
</dbReference>
<dbReference type="NCBIfam" id="NF001381">
    <property type="entry name" value="PRK00279.1-3"/>
    <property type="match status" value="1"/>
</dbReference>
<dbReference type="NCBIfam" id="NF011100">
    <property type="entry name" value="PRK14527.1"/>
    <property type="match status" value="1"/>
</dbReference>
<dbReference type="PANTHER" id="PTHR23359">
    <property type="entry name" value="NUCLEOTIDE KINASE"/>
    <property type="match status" value="1"/>
</dbReference>
<dbReference type="Pfam" id="PF00406">
    <property type="entry name" value="ADK"/>
    <property type="match status" value="1"/>
</dbReference>
<dbReference type="Pfam" id="PF05191">
    <property type="entry name" value="ADK_lid"/>
    <property type="match status" value="1"/>
</dbReference>
<dbReference type="PRINTS" id="PR00094">
    <property type="entry name" value="ADENYLTKNASE"/>
</dbReference>
<dbReference type="SUPFAM" id="SSF52540">
    <property type="entry name" value="P-loop containing nucleoside triphosphate hydrolases"/>
    <property type="match status" value="1"/>
</dbReference>
<dbReference type="PROSITE" id="PS00113">
    <property type="entry name" value="ADENYLATE_KINASE"/>
    <property type="match status" value="1"/>
</dbReference>
<keyword id="KW-0007">Acetylation</keyword>
<keyword id="KW-0067">ATP-binding</keyword>
<keyword id="KW-0963">Cytoplasm</keyword>
<keyword id="KW-0418">Kinase</keyword>
<keyword id="KW-0545">Nucleotide biosynthesis</keyword>
<keyword id="KW-0547">Nucleotide-binding</keyword>
<keyword id="KW-0808">Transferase</keyword>
<sequence>MRIILLGAPGAGKGTQAQFIMEKYGIPQISTGDMLRAAVKSGSELGKQAKDIMDAGKLVTDELVIALVKERIAQEDCRNGFLLDGFPRTIPQADAMKEAGINVDYVLEFDVPDELIVDRIVGRRVHAPSGRVYHVKFNPPKVEGKDDVTGEELTTRKDDQEETVRKRLVEYHQMTAPLIGYYSKEAEAGNTKYAKVDGTKPVAEVRADLEKILG</sequence>
<comment type="function">
    <text evidence="2">Catalyzes the reversible transfer of the terminal phosphate group between ATP and AMP. Plays an important role in cellular energy homeostasis and in adenine nucleotide metabolism.</text>
</comment>
<comment type="catalytic activity">
    <reaction evidence="2">
        <text>AMP + ATP = 2 ADP</text>
        <dbReference type="Rhea" id="RHEA:12973"/>
        <dbReference type="ChEBI" id="CHEBI:30616"/>
        <dbReference type="ChEBI" id="CHEBI:456215"/>
        <dbReference type="ChEBI" id="CHEBI:456216"/>
        <dbReference type="EC" id="2.7.4.3"/>
    </reaction>
</comment>
<comment type="pathway">
    <text evidence="2">Purine metabolism; AMP biosynthesis via salvage pathway; AMP from ADP: step 1/1.</text>
</comment>
<comment type="subunit">
    <text evidence="2">Monomer.</text>
</comment>
<comment type="subcellular location">
    <subcellularLocation>
        <location evidence="2">Cytoplasm</location>
    </subcellularLocation>
</comment>
<comment type="domain">
    <text evidence="2">Consists of three domains, a large central CORE domain and two small peripheral domains, NMPbind and LID, which undergo movements during catalysis. The LID domain closes over the site of phosphoryl transfer upon ATP binding. Assembling and dissambling the active center during each catalytic cycle provides an effective means to prevent ATP hydrolysis.</text>
</comment>
<comment type="similarity">
    <text evidence="2">Belongs to the adenylate kinase family.</text>
</comment>
<accession>B1XFR1</accession>
<reference key="1">
    <citation type="journal article" date="2008" name="J. Bacteriol.">
        <title>The complete genome sequence of Escherichia coli DH10B: insights into the biology of a laboratory workhorse.</title>
        <authorList>
            <person name="Durfee T."/>
            <person name="Nelson R."/>
            <person name="Baldwin S."/>
            <person name="Plunkett G. III"/>
            <person name="Burland V."/>
            <person name="Mau B."/>
            <person name="Petrosino J.F."/>
            <person name="Qin X."/>
            <person name="Muzny D.M."/>
            <person name="Ayele M."/>
            <person name="Gibbs R.A."/>
            <person name="Csorgo B."/>
            <person name="Posfai G."/>
            <person name="Weinstock G.M."/>
            <person name="Blattner F.R."/>
        </authorList>
    </citation>
    <scope>NUCLEOTIDE SEQUENCE [LARGE SCALE GENOMIC DNA]</scope>
    <source>
        <strain>K12 / DH10B</strain>
    </source>
</reference>
<protein>
    <recommendedName>
        <fullName evidence="2">Adenylate kinase</fullName>
        <shortName evidence="2">AK</shortName>
        <ecNumber evidence="2">2.7.4.3</ecNumber>
    </recommendedName>
    <alternativeName>
        <fullName evidence="2">ATP-AMP transphosphorylase</fullName>
    </alternativeName>
    <alternativeName>
        <fullName evidence="2">ATP:AMP phosphotransferase</fullName>
    </alternativeName>
    <alternativeName>
        <fullName evidence="2">Adenylate monophosphate kinase</fullName>
    </alternativeName>
</protein>
<proteinExistence type="inferred from homology"/>
<name>KAD_ECODH</name>
<evidence type="ECO:0000250" key="1"/>
<evidence type="ECO:0000255" key="2">
    <source>
        <dbReference type="HAMAP-Rule" id="MF_00235"/>
    </source>
</evidence>